<feature type="chain" id="PRO_0000422045" description="NAD(P) transhydrogenase subunit alpha">
    <location>
        <begin position="1"/>
        <end position="523"/>
    </location>
</feature>
<feature type="topological domain" description="Cytoplasmic" evidence="1 3">
    <location>
        <begin position="1"/>
        <end position="411"/>
    </location>
</feature>
<feature type="transmembrane region" description="Helical" evidence="1 3">
    <location>
        <begin position="412"/>
        <end position="432"/>
    </location>
</feature>
<feature type="transmembrane region" description="Helical" evidence="1 3">
    <location>
        <begin position="433"/>
        <end position="455"/>
    </location>
</feature>
<feature type="topological domain" description="Cytoplasmic" evidence="1 3">
    <location>
        <begin position="456"/>
        <end position="464"/>
    </location>
</feature>
<feature type="transmembrane region" description="Helical" evidence="1 3">
    <location>
        <begin position="465"/>
        <end position="485"/>
    </location>
</feature>
<feature type="topological domain" description="Periplasmic" evidence="1 3">
    <location>
        <begin position="486"/>
        <end position="489"/>
    </location>
</feature>
<feature type="transmembrane region" description="Helical" evidence="1 3">
    <location>
        <begin position="490"/>
        <end position="510"/>
    </location>
</feature>
<feature type="topological domain" description="Cytoplasmic" evidence="1 3">
    <location>
        <begin position="511"/>
        <end position="523"/>
    </location>
</feature>
<feature type="binding site" evidence="2">
    <location>
        <begin position="127"/>
        <end position="130"/>
    </location>
    <ligand>
        <name>NAD(+)</name>
        <dbReference type="ChEBI" id="CHEBI:57540"/>
    </ligand>
</feature>
<feature type="binding site" evidence="1">
    <location>
        <position position="177"/>
    </location>
    <ligand>
        <name>NAD(+)</name>
        <dbReference type="ChEBI" id="CHEBI:57540"/>
    </ligand>
</feature>
<feature type="binding site" evidence="1 2">
    <location>
        <begin position="197"/>
        <end position="199"/>
    </location>
    <ligand>
        <name>NAD(+)</name>
        <dbReference type="ChEBI" id="CHEBI:57540"/>
    </ligand>
</feature>
<feature type="binding site" evidence="2">
    <location>
        <position position="229"/>
    </location>
    <ligand>
        <name>NAD(+)</name>
        <dbReference type="ChEBI" id="CHEBI:57540"/>
    </ligand>
</feature>
<keyword id="KW-0997">Cell inner membrane</keyword>
<keyword id="KW-1003">Cell membrane</keyword>
<keyword id="KW-0472">Membrane</keyword>
<keyword id="KW-0520">NAD</keyword>
<keyword id="KW-0521">NADP</keyword>
<keyword id="KW-0547">Nucleotide-binding</keyword>
<keyword id="KW-1278">Translocase</keyword>
<keyword id="KW-0812">Transmembrane</keyword>
<keyword id="KW-1133">Transmembrane helix</keyword>
<gene>
    <name evidence="5" type="primary">pntA</name>
</gene>
<organism>
    <name type="scientific">Cereibacter sphaeroides</name>
    <name type="common">Rhodobacter sphaeroides</name>
    <dbReference type="NCBI Taxonomy" id="1063"/>
    <lineage>
        <taxon>Bacteria</taxon>
        <taxon>Pseudomonadati</taxon>
        <taxon>Pseudomonadota</taxon>
        <taxon>Alphaproteobacteria</taxon>
        <taxon>Rhodobacterales</taxon>
        <taxon>Paracoccaceae</taxon>
        <taxon>Cereibacter</taxon>
    </lineage>
</organism>
<reference evidence="5" key="1">
    <citation type="journal article" date="2002" name="J. Bacteriol.">
        <title>Link between the membrane-bound pyridine nucleotide transhydrogenase and glutathione-dependent processes in Rhodobacter sphaeroides.</title>
        <authorList>
            <person name="Hickman J.W."/>
            <person name="Barber R.D."/>
            <person name="Skaar E.P."/>
            <person name="Donohue T.J."/>
        </authorList>
    </citation>
    <scope>NUCLEOTIDE SEQUENCE [GENOMIC DNA]</scope>
    <scope>CATALYTIC ACTIVITY</scope>
    <scope>DISRUPTION PHENOTYPE</scope>
    <source>
        <strain evidence="4">Ga</strain>
    </source>
</reference>
<proteinExistence type="evidence at protein level"/>
<dbReference type="EC" id="7.1.1.1" evidence="4"/>
<dbReference type="EMBL" id="AY026033">
    <property type="protein sequence ID" value="AAK00588.1"/>
    <property type="molecule type" value="Genomic_DNA"/>
</dbReference>
<dbReference type="RefSeq" id="WP_002720404.1">
    <property type="nucleotide sequence ID" value="NZ_CP051468.1"/>
</dbReference>
<dbReference type="SMR" id="Q9ALA2"/>
<dbReference type="GO" id="GO:0005886">
    <property type="term" value="C:plasma membrane"/>
    <property type="evidence" value="ECO:0000250"/>
    <property type="project" value="UniProtKB"/>
</dbReference>
<dbReference type="GO" id="GO:0050661">
    <property type="term" value="F:NADP binding"/>
    <property type="evidence" value="ECO:0000250"/>
    <property type="project" value="UniProtKB"/>
</dbReference>
<dbReference type="GO" id="GO:0046983">
    <property type="term" value="F:protein dimerization activity"/>
    <property type="evidence" value="ECO:0000250"/>
    <property type="project" value="UniProtKB"/>
</dbReference>
<dbReference type="GO" id="GO:0008750">
    <property type="term" value="F:proton-translocating NAD(P)+ transhydrogenase activity"/>
    <property type="evidence" value="ECO:0000314"/>
    <property type="project" value="UniProtKB"/>
</dbReference>
<dbReference type="GO" id="GO:0034599">
    <property type="term" value="P:cellular response to oxidative stress"/>
    <property type="evidence" value="ECO:0000315"/>
    <property type="project" value="UniProtKB"/>
</dbReference>
<dbReference type="GO" id="GO:0006740">
    <property type="term" value="P:NADPH regeneration"/>
    <property type="evidence" value="ECO:0000314"/>
    <property type="project" value="UniProtKB"/>
</dbReference>
<dbReference type="CDD" id="cd05304">
    <property type="entry name" value="Rubrum_tdh"/>
    <property type="match status" value="1"/>
</dbReference>
<dbReference type="FunFam" id="3.40.50.720:FF:000028">
    <property type="entry name" value="NAD(P) transhydrogenase subunit alpha"/>
    <property type="match status" value="1"/>
</dbReference>
<dbReference type="Gene3D" id="3.40.50.720">
    <property type="entry name" value="NAD(P)-binding Rossmann-like Domain"/>
    <property type="match status" value="2"/>
</dbReference>
<dbReference type="InterPro" id="IPR007886">
    <property type="entry name" value="AlaDH/PNT_N"/>
</dbReference>
<dbReference type="InterPro" id="IPR007698">
    <property type="entry name" value="AlaDH/PNT_NAD(H)-bd"/>
</dbReference>
<dbReference type="InterPro" id="IPR036291">
    <property type="entry name" value="NAD(P)-bd_dom_sf"/>
</dbReference>
<dbReference type="InterPro" id="IPR026255">
    <property type="entry name" value="NADP_transhyd_a"/>
</dbReference>
<dbReference type="InterPro" id="IPR024605">
    <property type="entry name" value="NADP_transhyd_a_C"/>
</dbReference>
<dbReference type="NCBIfam" id="TIGR00561">
    <property type="entry name" value="pntA"/>
    <property type="match status" value="1"/>
</dbReference>
<dbReference type="NCBIfam" id="NF006942">
    <property type="entry name" value="PRK09424.1"/>
    <property type="match status" value="1"/>
</dbReference>
<dbReference type="PANTHER" id="PTHR10160">
    <property type="entry name" value="NAD(P) TRANSHYDROGENASE"/>
    <property type="match status" value="1"/>
</dbReference>
<dbReference type="PANTHER" id="PTHR10160:SF19">
    <property type="entry name" value="PROTON-TRANSLOCATING NAD(P)(+) TRANSHYDROGENASE"/>
    <property type="match status" value="1"/>
</dbReference>
<dbReference type="Pfam" id="PF01262">
    <property type="entry name" value="AlaDh_PNT_C"/>
    <property type="match status" value="1"/>
</dbReference>
<dbReference type="Pfam" id="PF05222">
    <property type="entry name" value="AlaDh_PNT_N"/>
    <property type="match status" value="1"/>
</dbReference>
<dbReference type="Pfam" id="PF12769">
    <property type="entry name" value="PNTB_4TM"/>
    <property type="match status" value="1"/>
</dbReference>
<dbReference type="PIRSF" id="PIRSF000203">
    <property type="entry name" value="NADP_transhydrogenase_alpha"/>
    <property type="match status" value="1"/>
</dbReference>
<dbReference type="SMART" id="SM01002">
    <property type="entry name" value="AlaDh_PNT_C"/>
    <property type="match status" value="1"/>
</dbReference>
<dbReference type="SMART" id="SM01003">
    <property type="entry name" value="AlaDh_PNT_N"/>
    <property type="match status" value="1"/>
</dbReference>
<dbReference type="SUPFAM" id="SSF52283">
    <property type="entry name" value="Formate/glycerate dehydrogenase catalytic domain-like"/>
    <property type="match status" value="1"/>
</dbReference>
<dbReference type="SUPFAM" id="SSF51735">
    <property type="entry name" value="NAD(P)-binding Rossmann-fold domains"/>
    <property type="match status" value="1"/>
</dbReference>
<accession>Q9ALA2</accession>
<sequence>MKIGAPREIFEGEARVAMTPDSALQLQKLGHHCVIETGAGMKAGFSDEAYAAAGVEVLPSAAALFEAADIVVKVRGPERAEAERLRRGQTLISFFWPAQNAELLELCKEKGATVVAMDMVPRISRAQKMDALSSMANIAGYRAVIEAGNNFGRFFTGQVTAAGKVPPAKVLVVGAGVAGLAAIGTATSLGAITYAFDVRPEVAEQIESMGAEFVYLEFEEAQDGAATGGYAAPSSPEFREKQLAKFRELAPEMDIVITTALIPGRPAPKLWTEDMVSAMKRGSVIVDLASERGGNCDLTVPDQKIVTPNGVTIVGYTDFPSRMAAQASTLYSTNIRHMLTDLTPKKDGVIHHNMEDDVIRGATVTHDGAITFPPPPPKVAAIAAAKPREKVKELTPEEKRAAEIATFRKQTVSQVAMLAVGTALLLFVGMYAPPSFMAHFIVFALACFVGFQVIWNVSHSLHTPLMAVTNAISGIVILGALLQIGSGNVLVVLLAAISVLIATINIVGGFLVTRRMLAMFQKS</sequence>
<comment type="function">
    <text evidence="1">The transhydrogenation between NADH and NADP is coupled to respiration and ATP hydrolysis and functions as a proton pump across the membrane.</text>
</comment>
<comment type="catalytic activity">
    <reaction evidence="4">
        <text>NAD(+) + NADPH + H(+)(in) = NADH + NADP(+) + H(+)(out)</text>
        <dbReference type="Rhea" id="RHEA:47992"/>
        <dbReference type="ChEBI" id="CHEBI:15378"/>
        <dbReference type="ChEBI" id="CHEBI:57540"/>
        <dbReference type="ChEBI" id="CHEBI:57783"/>
        <dbReference type="ChEBI" id="CHEBI:57945"/>
        <dbReference type="ChEBI" id="CHEBI:58349"/>
        <dbReference type="EC" id="7.1.1.1"/>
    </reaction>
</comment>
<comment type="subunit">
    <text evidence="1">Heterodimer of an alpha (PntA) and a beta (PntB) chain.</text>
</comment>
<comment type="subcellular location">
    <subcellularLocation>
        <location evidence="1">Cell inner membrane</location>
        <topology evidence="1">Multi-pass membrane protein</topology>
    </subcellularLocation>
</comment>
<comment type="disruption phenotype">
    <text evidence="4">Loss of transhydrogenase activity. Sensitive to aerobic methanol, but can utilize methanol as a sole carbon source in the absence of oxygen. Not defective in formaldehyde oxidation under anaerobic conditions. Increased specific activities of other NADPH-producing enzymes. Has higher levels of glutathione disulfide and increased sensitivity to oxidative stress agents like diamine in a succinate-based minimal medium under aerobic conditions. However, the size of the glutathione pool, levels of glutathione disulfide and growth inhibition by diamide are comparable with wild-type when grown aerobically in a glucose-based minimal medium indicating that glucose utilization provides a means to the disruption mutants to maintain the oxidation reduction state of glutathione pool and cytoplasmic proteins.</text>
</comment>
<comment type="similarity">
    <text evidence="3">Belongs to the AlaDH/PNT family.</text>
</comment>
<protein>
    <recommendedName>
        <fullName evidence="1">NAD(P) transhydrogenase subunit alpha</fullName>
        <ecNumber evidence="4">7.1.1.1</ecNumber>
    </recommendedName>
    <alternativeName>
        <fullName evidence="1">Nicotinamide nucleotide transhydrogenase subunit alpha</fullName>
    </alternativeName>
    <alternativeName>
        <fullName evidence="1 5">Pyridine nucleotide transhydrogenase subunit alpha</fullName>
    </alternativeName>
</protein>
<evidence type="ECO:0000250" key="1">
    <source>
        <dbReference type="UniProtKB" id="P07001"/>
    </source>
</evidence>
<evidence type="ECO:0000250" key="2">
    <source>
        <dbReference type="UniProtKB" id="P0C186"/>
    </source>
</evidence>
<evidence type="ECO:0000255" key="3"/>
<evidence type="ECO:0000269" key="4">
    <source>
    </source>
</evidence>
<evidence type="ECO:0000312" key="5">
    <source>
        <dbReference type="EMBL" id="AAK00588.1"/>
    </source>
</evidence>
<name>PNTA_CERSP</name>